<sequence length="61" mass="7304">MAKKSMIAKQQRKQKFKVQEYTRCERCGRPHSVIRKFKLCRICFRELAYKGQIPGVKKASW</sequence>
<keyword id="KW-0479">Metal-binding</keyword>
<keyword id="KW-0687">Ribonucleoprotein</keyword>
<keyword id="KW-0689">Ribosomal protein</keyword>
<keyword id="KW-0694">RNA-binding</keyword>
<keyword id="KW-0699">rRNA-binding</keyword>
<keyword id="KW-0862">Zinc</keyword>
<proteinExistence type="inferred from homology"/>
<comment type="function">
    <text evidence="1">Binds 16S rRNA, required for the assembly of 30S particles and may also be responsible for determining the conformation of the 16S rRNA at the A site.</text>
</comment>
<comment type="cofactor">
    <cofactor evidence="1">
        <name>Zn(2+)</name>
        <dbReference type="ChEBI" id="CHEBI:29105"/>
    </cofactor>
    <text evidence="1">Binds 1 zinc ion per subunit.</text>
</comment>
<comment type="subunit">
    <text evidence="1">Part of the 30S ribosomal subunit. Contacts proteins S3 and S10.</text>
</comment>
<comment type="similarity">
    <text evidence="1">Belongs to the universal ribosomal protein uS14 family. Zinc-binding uS14 subfamily.</text>
</comment>
<gene>
    <name evidence="1" type="primary">rpsZ</name>
    <name evidence="1" type="synonym">rpsN</name>
    <name type="ordered locus">BPUM_0115</name>
</gene>
<name>RS14Z_BACP2</name>
<organism>
    <name type="scientific">Bacillus pumilus (strain SAFR-032)</name>
    <dbReference type="NCBI Taxonomy" id="315750"/>
    <lineage>
        <taxon>Bacteria</taxon>
        <taxon>Bacillati</taxon>
        <taxon>Bacillota</taxon>
        <taxon>Bacilli</taxon>
        <taxon>Bacillales</taxon>
        <taxon>Bacillaceae</taxon>
        <taxon>Bacillus</taxon>
    </lineage>
</organism>
<feature type="chain" id="PRO_1000067926" description="Small ribosomal subunit protein uS14B">
    <location>
        <begin position="1"/>
        <end position="61"/>
    </location>
</feature>
<feature type="binding site" evidence="1">
    <location>
        <position position="24"/>
    </location>
    <ligand>
        <name>Zn(2+)</name>
        <dbReference type="ChEBI" id="CHEBI:29105"/>
    </ligand>
</feature>
<feature type="binding site" evidence="1">
    <location>
        <position position="27"/>
    </location>
    <ligand>
        <name>Zn(2+)</name>
        <dbReference type="ChEBI" id="CHEBI:29105"/>
    </ligand>
</feature>
<feature type="binding site" evidence="1">
    <location>
        <position position="40"/>
    </location>
    <ligand>
        <name>Zn(2+)</name>
        <dbReference type="ChEBI" id="CHEBI:29105"/>
    </ligand>
</feature>
<feature type="binding site" evidence="1">
    <location>
        <position position="43"/>
    </location>
    <ligand>
        <name>Zn(2+)</name>
        <dbReference type="ChEBI" id="CHEBI:29105"/>
    </ligand>
</feature>
<protein>
    <recommendedName>
        <fullName evidence="1">Small ribosomal subunit protein uS14B</fullName>
    </recommendedName>
    <alternativeName>
        <fullName evidence="2">30S ribosomal protein S14 type Z</fullName>
    </alternativeName>
</protein>
<reference key="1">
    <citation type="journal article" date="2007" name="PLoS ONE">
        <title>Paradoxical DNA repair and peroxide resistance gene conservation in Bacillus pumilus SAFR-032.</title>
        <authorList>
            <person name="Gioia J."/>
            <person name="Yerrapragada S."/>
            <person name="Qin X."/>
            <person name="Jiang H."/>
            <person name="Igboeli O.C."/>
            <person name="Muzny D."/>
            <person name="Dugan-Rocha S."/>
            <person name="Ding Y."/>
            <person name="Hawes A."/>
            <person name="Liu W."/>
            <person name="Perez L."/>
            <person name="Kovar C."/>
            <person name="Dinh H."/>
            <person name="Lee S."/>
            <person name="Nazareth L."/>
            <person name="Blyth P."/>
            <person name="Holder M."/>
            <person name="Buhay C."/>
            <person name="Tirumalai M.R."/>
            <person name="Liu Y."/>
            <person name="Dasgupta I."/>
            <person name="Bokhetache L."/>
            <person name="Fujita M."/>
            <person name="Karouia F."/>
            <person name="Eswara Moorthy P."/>
            <person name="Siefert J."/>
            <person name="Uzman A."/>
            <person name="Buzumbo P."/>
            <person name="Verma A."/>
            <person name="Zwiya H."/>
            <person name="McWilliams B.D."/>
            <person name="Olowu A."/>
            <person name="Clinkenbeard K.D."/>
            <person name="Newcombe D."/>
            <person name="Golebiewski L."/>
            <person name="Petrosino J.F."/>
            <person name="Nicholson W.L."/>
            <person name="Fox G.E."/>
            <person name="Venkateswaran K."/>
            <person name="Highlander S.K."/>
            <person name="Weinstock G.M."/>
        </authorList>
    </citation>
    <scope>NUCLEOTIDE SEQUENCE [LARGE SCALE GENOMIC DNA]</scope>
    <source>
        <strain>SAFR-032</strain>
    </source>
</reference>
<accession>A8F998</accession>
<evidence type="ECO:0000255" key="1">
    <source>
        <dbReference type="HAMAP-Rule" id="MF_01364"/>
    </source>
</evidence>
<evidence type="ECO:0000305" key="2"/>
<dbReference type="EMBL" id="CP000813">
    <property type="protein sequence ID" value="ABV60815.1"/>
    <property type="molecule type" value="Genomic_DNA"/>
</dbReference>
<dbReference type="RefSeq" id="WP_008356542.1">
    <property type="nucleotide sequence ID" value="NZ_VEIS01000020.1"/>
</dbReference>
<dbReference type="SMR" id="A8F998"/>
<dbReference type="STRING" id="315750.BPUM_0115"/>
<dbReference type="GeneID" id="66361746"/>
<dbReference type="KEGG" id="bpu:BPUM_0115"/>
<dbReference type="eggNOG" id="COG0199">
    <property type="taxonomic scope" value="Bacteria"/>
</dbReference>
<dbReference type="HOGENOM" id="CLU_139869_3_0_9"/>
<dbReference type="OrthoDB" id="9810484at2"/>
<dbReference type="Proteomes" id="UP000001355">
    <property type="component" value="Chromosome"/>
</dbReference>
<dbReference type="GO" id="GO:0015935">
    <property type="term" value="C:small ribosomal subunit"/>
    <property type="evidence" value="ECO:0007669"/>
    <property type="project" value="TreeGrafter"/>
</dbReference>
<dbReference type="GO" id="GO:0019843">
    <property type="term" value="F:rRNA binding"/>
    <property type="evidence" value="ECO:0007669"/>
    <property type="project" value="UniProtKB-UniRule"/>
</dbReference>
<dbReference type="GO" id="GO:0003735">
    <property type="term" value="F:structural constituent of ribosome"/>
    <property type="evidence" value="ECO:0007669"/>
    <property type="project" value="InterPro"/>
</dbReference>
<dbReference type="GO" id="GO:0008270">
    <property type="term" value="F:zinc ion binding"/>
    <property type="evidence" value="ECO:0007669"/>
    <property type="project" value="UniProtKB-UniRule"/>
</dbReference>
<dbReference type="GO" id="GO:0006412">
    <property type="term" value="P:translation"/>
    <property type="evidence" value="ECO:0007669"/>
    <property type="project" value="UniProtKB-UniRule"/>
</dbReference>
<dbReference type="FunFam" id="4.10.830.10:FF:000001">
    <property type="entry name" value="30S ribosomal protein S14 type Z"/>
    <property type="match status" value="1"/>
</dbReference>
<dbReference type="Gene3D" id="4.10.830.10">
    <property type="entry name" value="30s Ribosomal Protein S14, Chain N"/>
    <property type="match status" value="1"/>
</dbReference>
<dbReference type="HAMAP" id="MF_01364_B">
    <property type="entry name" value="Ribosomal_uS14_2_B"/>
    <property type="match status" value="1"/>
</dbReference>
<dbReference type="InterPro" id="IPR001209">
    <property type="entry name" value="Ribosomal_uS14"/>
</dbReference>
<dbReference type="InterPro" id="IPR023053">
    <property type="entry name" value="Ribosomal_uS14_bact"/>
</dbReference>
<dbReference type="InterPro" id="IPR018271">
    <property type="entry name" value="Ribosomal_uS14_CS"/>
</dbReference>
<dbReference type="InterPro" id="IPR043140">
    <property type="entry name" value="Ribosomal_uS14_sf"/>
</dbReference>
<dbReference type="NCBIfam" id="NF005974">
    <property type="entry name" value="PRK08061.1"/>
    <property type="match status" value="1"/>
</dbReference>
<dbReference type="PANTHER" id="PTHR19836">
    <property type="entry name" value="30S RIBOSOMAL PROTEIN S14"/>
    <property type="match status" value="1"/>
</dbReference>
<dbReference type="PANTHER" id="PTHR19836:SF26">
    <property type="entry name" value="SMALL RIBOSOMAL SUBUNIT PROTEIN US14B"/>
    <property type="match status" value="1"/>
</dbReference>
<dbReference type="Pfam" id="PF00253">
    <property type="entry name" value="Ribosomal_S14"/>
    <property type="match status" value="1"/>
</dbReference>
<dbReference type="SUPFAM" id="SSF57716">
    <property type="entry name" value="Glucocorticoid receptor-like (DNA-binding domain)"/>
    <property type="match status" value="1"/>
</dbReference>
<dbReference type="PROSITE" id="PS00527">
    <property type="entry name" value="RIBOSOMAL_S14"/>
    <property type="match status" value="1"/>
</dbReference>